<dbReference type="EC" id="4.2.1.11" evidence="1"/>
<dbReference type="EMBL" id="BX950851">
    <property type="protein sequence ID" value="CAG76464.1"/>
    <property type="molecule type" value="Genomic_DNA"/>
</dbReference>
<dbReference type="RefSeq" id="WP_011095069.1">
    <property type="nucleotide sequence ID" value="NC_004547.2"/>
</dbReference>
<dbReference type="SMR" id="Q6D182"/>
<dbReference type="STRING" id="218491.ECA3566"/>
<dbReference type="KEGG" id="eca:ECA3566"/>
<dbReference type="PATRIC" id="fig|218491.5.peg.3614"/>
<dbReference type="eggNOG" id="COG0148">
    <property type="taxonomic scope" value="Bacteria"/>
</dbReference>
<dbReference type="HOGENOM" id="CLU_031223_2_1_6"/>
<dbReference type="OrthoDB" id="9804716at2"/>
<dbReference type="UniPathway" id="UPA00109">
    <property type="reaction ID" value="UER00187"/>
</dbReference>
<dbReference type="Proteomes" id="UP000007966">
    <property type="component" value="Chromosome"/>
</dbReference>
<dbReference type="GO" id="GO:0009986">
    <property type="term" value="C:cell surface"/>
    <property type="evidence" value="ECO:0007669"/>
    <property type="project" value="UniProtKB-SubCell"/>
</dbReference>
<dbReference type="GO" id="GO:0005576">
    <property type="term" value="C:extracellular region"/>
    <property type="evidence" value="ECO:0007669"/>
    <property type="project" value="UniProtKB-SubCell"/>
</dbReference>
<dbReference type="GO" id="GO:0000015">
    <property type="term" value="C:phosphopyruvate hydratase complex"/>
    <property type="evidence" value="ECO:0007669"/>
    <property type="project" value="InterPro"/>
</dbReference>
<dbReference type="GO" id="GO:0000287">
    <property type="term" value="F:magnesium ion binding"/>
    <property type="evidence" value="ECO:0007669"/>
    <property type="project" value="UniProtKB-UniRule"/>
</dbReference>
<dbReference type="GO" id="GO:0004634">
    <property type="term" value="F:phosphopyruvate hydratase activity"/>
    <property type="evidence" value="ECO:0007669"/>
    <property type="project" value="UniProtKB-UniRule"/>
</dbReference>
<dbReference type="GO" id="GO:0006096">
    <property type="term" value="P:glycolytic process"/>
    <property type="evidence" value="ECO:0007669"/>
    <property type="project" value="UniProtKB-UniRule"/>
</dbReference>
<dbReference type="CDD" id="cd03313">
    <property type="entry name" value="enolase"/>
    <property type="match status" value="1"/>
</dbReference>
<dbReference type="FunFam" id="3.20.20.120:FF:000001">
    <property type="entry name" value="Enolase"/>
    <property type="match status" value="1"/>
</dbReference>
<dbReference type="FunFam" id="3.30.390.10:FF:000001">
    <property type="entry name" value="Enolase"/>
    <property type="match status" value="1"/>
</dbReference>
<dbReference type="Gene3D" id="3.20.20.120">
    <property type="entry name" value="Enolase-like C-terminal domain"/>
    <property type="match status" value="1"/>
</dbReference>
<dbReference type="Gene3D" id="3.30.390.10">
    <property type="entry name" value="Enolase-like, N-terminal domain"/>
    <property type="match status" value="1"/>
</dbReference>
<dbReference type="HAMAP" id="MF_00318">
    <property type="entry name" value="Enolase"/>
    <property type="match status" value="1"/>
</dbReference>
<dbReference type="InterPro" id="IPR000941">
    <property type="entry name" value="Enolase"/>
</dbReference>
<dbReference type="InterPro" id="IPR036849">
    <property type="entry name" value="Enolase-like_C_sf"/>
</dbReference>
<dbReference type="InterPro" id="IPR029017">
    <property type="entry name" value="Enolase-like_N"/>
</dbReference>
<dbReference type="InterPro" id="IPR020810">
    <property type="entry name" value="Enolase_C"/>
</dbReference>
<dbReference type="InterPro" id="IPR020809">
    <property type="entry name" value="Enolase_CS"/>
</dbReference>
<dbReference type="InterPro" id="IPR020811">
    <property type="entry name" value="Enolase_N"/>
</dbReference>
<dbReference type="NCBIfam" id="TIGR01060">
    <property type="entry name" value="eno"/>
    <property type="match status" value="1"/>
</dbReference>
<dbReference type="PANTHER" id="PTHR11902">
    <property type="entry name" value="ENOLASE"/>
    <property type="match status" value="1"/>
</dbReference>
<dbReference type="PANTHER" id="PTHR11902:SF1">
    <property type="entry name" value="ENOLASE"/>
    <property type="match status" value="1"/>
</dbReference>
<dbReference type="Pfam" id="PF00113">
    <property type="entry name" value="Enolase_C"/>
    <property type="match status" value="1"/>
</dbReference>
<dbReference type="Pfam" id="PF03952">
    <property type="entry name" value="Enolase_N"/>
    <property type="match status" value="1"/>
</dbReference>
<dbReference type="PIRSF" id="PIRSF001400">
    <property type="entry name" value="Enolase"/>
    <property type="match status" value="1"/>
</dbReference>
<dbReference type="PRINTS" id="PR00148">
    <property type="entry name" value="ENOLASE"/>
</dbReference>
<dbReference type="SFLD" id="SFLDF00002">
    <property type="entry name" value="enolase"/>
    <property type="match status" value="1"/>
</dbReference>
<dbReference type="SFLD" id="SFLDG00178">
    <property type="entry name" value="enolase"/>
    <property type="match status" value="1"/>
</dbReference>
<dbReference type="SMART" id="SM01192">
    <property type="entry name" value="Enolase_C"/>
    <property type="match status" value="1"/>
</dbReference>
<dbReference type="SMART" id="SM01193">
    <property type="entry name" value="Enolase_N"/>
    <property type="match status" value="1"/>
</dbReference>
<dbReference type="SUPFAM" id="SSF51604">
    <property type="entry name" value="Enolase C-terminal domain-like"/>
    <property type="match status" value="1"/>
</dbReference>
<dbReference type="SUPFAM" id="SSF54826">
    <property type="entry name" value="Enolase N-terminal domain-like"/>
    <property type="match status" value="1"/>
</dbReference>
<dbReference type="PROSITE" id="PS00164">
    <property type="entry name" value="ENOLASE"/>
    <property type="match status" value="1"/>
</dbReference>
<proteinExistence type="inferred from homology"/>
<gene>
    <name evidence="1" type="primary">eno</name>
    <name type="ordered locus">ECA3566</name>
</gene>
<feature type="chain" id="PRO_0000133887" description="Enolase">
    <location>
        <begin position="1"/>
        <end position="431"/>
    </location>
</feature>
<feature type="active site" description="Proton donor" evidence="1">
    <location>
        <position position="209"/>
    </location>
</feature>
<feature type="active site" description="Proton acceptor" evidence="1">
    <location>
        <position position="342"/>
    </location>
</feature>
<feature type="binding site" evidence="1">
    <location>
        <position position="167"/>
    </location>
    <ligand>
        <name>(2R)-2-phosphoglycerate</name>
        <dbReference type="ChEBI" id="CHEBI:58289"/>
    </ligand>
</feature>
<feature type="binding site" evidence="1">
    <location>
        <position position="246"/>
    </location>
    <ligand>
        <name>Mg(2+)</name>
        <dbReference type="ChEBI" id="CHEBI:18420"/>
    </ligand>
</feature>
<feature type="binding site" evidence="1">
    <location>
        <position position="290"/>
    </location>
    <ligand>
        <name>Mg(2+)</name>
        <dbReference type="ChEBI" id="CHEBI:18420"/>
    </ligand>
</feature>
<feature type="binding site" evidence="1">
    <location>
        <position position="317"/>
    </location>
    <ligand>
        <name>Mg(2+)</name>
        <dbReference type="ChEBI" id="CHEBI:18420"/>
    </ligand>
</feature>
<feature type="binding site" evidence="1">
    <location>
        <position position="342"/>
    </location>
    <ligand>
        <name>(2R)-2-phosphoglycerate</name>
        <dbReference type="ChEBI" id="CHEBI:58289"/>
    </ligand>
</feature>
<feature type="binding site" evidence="1">
    <location>
        <position position="371"/>
    </location>
    <ligand>
        <name>(2R)-2-phosphoglycerate</name>
        <dbReference type="ChEBI" id="CHEBI:58289"/>
    </ligand>
</feature>
<feature type="binding site" evidence="1">
    <location>
        <position position="372"/>
    </location>
    <ligand>
        <name>(2R)-2-phosphoglycerate</name>
        <dbReference type="ChEBI" id="CHEBI:58289"/>
    </ligand>
</feature>
<feature type="binding site" evidence="1">
    <location>
        <position position="393"/>
    </location>
    <ligand>
        <name>(2R)-2-phosphoglycerate</name>
        <dbReference type="ChEBI" id="CHEBI:58289"/>
    </ligand>
</feature>
<comment type="function">
    <text evidence="1">Catalyzes the reversible conversion of 2-phosphoglycerate (2-PG) into phosphoenolpyruvate (PEP). It is essential for the degradation of carbohydrates via glycolysis.</text>
</comment>
<comment type="catalytic activity">
    <reaction evidence="1">
        <text>(2R)-2-phosphoglycerate = phosphoenolpyruvate + H2O</text>
        <dbReference type="Rhea" id="RHEA:10164"/>
        <dbReference type="ChEBI" id="CHEBI:15377"/>
        <dbReference type="ChEBI" id="CHEBI:58289"/>
        <dbReference type="ChEBI" id="CHEBI:58702"/>
        <dbReference type="EC" id="4.2.1.11"/>
    </reaction>
</comment>
<comment type="cofactor">
    <cofactor evidence="1">
        <name>Mg(2+)</name>
        <dbReference type="ChEBI" id="CHEBI:18420"/>
    </cofactor>
    <text evidence="1">Binds a second Mg(2+) ion via substrate during catalysis.</text>
</comment>
<comment type="pathway">
    <text evidence="1">Carbohydrate degradation; glycolysis; pyruvate from D-glyceraldehyde 3-phosphate: step 4/5.</text>
</comment>
<comment type="subunit">
    <text evidence="1">Component of the RNA degradosome, a multiprotein complex involved in RNA processing and mRNA degradation.</text>
</comment>
<comment type="subcellular location">
    <subcellularLocation>
        <location evidence="1">Cytoplasm</location>
    </subcellularLocation>
    <subcellularLocation>
        <location evidence="1">Secreted</location>
    </subcellularLocation>
    <subcellularLocation>
        <location evidence="1">Cell surface</location>
    </subcellularLocation>
    <text evidence="1">Fractions of enolase are present in both the cytoplasm and on the cell surface.</text>
</comment>
<comment type="similarity">
    <text evidence="1">Belongs to the enolase family.</text>
</comment>
<protein>
    <recommendedName>
        <fullName evidence="1">Enolase</fullName>
        <ecNumber evidence="1">4.2.1.11</ecNumber>
    </recommendedName>
    <alternativeName>
        <fullName evidence="1">2-phospho-D-glycerate hydro-lyase</fullName>
    </alternativeName>
    <alternativeName>
        <fullName evidence="1">2-phosphoglycerate dehydratase</fullName>
    </alternativeName>
</protein>
<reference key="1">
    <citation type="journal article" date="2004" name="Proc. Natl. Acad. Sci. U.S.A.">
        <title>Genome sequence of the enterobacterial phytopathogen Erwinia carotovora subsp. atroseptica and characterization of virulence factors.</title>
        <authorList>
            <person name="Bell K.S."/>
            <person name="Sebaihia M."/>
            <person name="Pritchard L."/>
            <person name="Holden M.T.G."/>
            <person name="Hyman L.J."/>
            <person name="Holeva M.C."/>
            <person name="Thomson N.R."/>
            <person name="Bentley S.D."/>
            <person name="Churcher L.J.C."/>
            <person name="Mungall K."/>
            <person name="Atkin R."/>
            <person name="Bason N."/>
            <person name="Brooks K."/>
            <person name="Chillingworth T."/>
            <person name="Clark K."/>
            <person name="Doggett J."/>
            <person name="Fraser A."/>
            <person name="Hance Z."/>
            <person name="Hauser H."/>
            <person name="Jagels K."/>
            <person name="Moule S."/>
            <person name="Norbertczak H."/>
            <person name="Ormond D."/>
            <person name="Price C."/>
            <person name="Quail M.A."/>
            <person name="Sanders M."/>
            <person name="Walker D."/>
            <person name="Whitehead S."/>
            <person name="Salmond G.P.C."/>
            <person name="Birch P.R.J."/>
            <person name="Parkhill J."/>
            <person name="Toth I.K."/>
        </authorList>
    </citation>
    <scope>NUCLEOTIDE SEQUENCE [LARGE SCALE GENOMIC DNA]</scope>
    <source>
        <strain>SCRI 1043 / ATCC BAA-672</strain>
    </source>
</reference>
<evidence type="ECO:0000255" key="1">
    <source>
        <dbReference type="HAMAP-Rule" id="MF_00318"/>
    </source>
</evidence>
<accession>Q6D182</accession>
<name>ENO_PECAS</name>
<keyword id="KW-0963">Cytoplasm</keyword>
<keyword id="KW-0324">Glycolysis</keyword>
<keyword id="KW-0456">Lyase</keyword>
<keyword id="KW-0460">Magnesium</keyword>
<keyword id="KW-0479">Metal-binding</keyword>
<keyword id="KW-1185">Reference proteome</keyword>
<keyword id="KW-0964">Secreted</keyword>
<sequence>MSKIVKVIGREIIDSRGNPTVEAEVHLEGGFVGLAAAPSGASTGSREALELRDGDKSRFLGKGVTKAVAAVNGPIAQAVLGKDAKDQANIDKIMIDLDGTENKSQFGANAILAVSLAAAKAAAASKGLPLYAHIAELNGTPGKYSMPLPMMNIINGGEHADNNVDIQEFMIQPVGAKTLKEAIRMGSEVFHTLAKVLKSKGMGTAVGDEGGYAPNLGSNAEALAVIAEAVKAAGYELGKDITLAMDCAASEFYKDGKYVLAGEGNKSFTSEEFTHFLEDLTKQYPIVSIEDGLDESDWAGFAYQTKVLGDKIQLVGDDLFVTNTKILKEGIDKGIANSILIKFNQIGSLTETLAAIKMAKDAGYTAVISHRSGETEDATIADLAVGTAAGQIKTGSMSRSDRVAKYNQLIRIEEALGDSAPFNGLKEVKGQ</sequence>
<organism>
    <name type="scientific">Pectobacterium atrosepticum (strain SCRI 1043 / ATCC BAA-672)</name>
    <name type="common">Erwinia carotovora subsp. atroseptica</name>
    <dbReference type="NCBI Taxonomy" id="218491"/>
    <lineage>
        <taxon>Bacteria</taxon>
        <taxon>Pseudomonadati</taxon>
        <taxon>Pseudomonadota</taxon>
        <taxon>Gammaproteobacteria</taxon>
        <taxon>Enterobacterales</taxon>
        <taxon>Pectobacteriaceae</taxon>
        <taxon>Pectobacterium</taxon>
    </lineage>
</organism>